<feature type="chain" id="PRO_1000008169" description="Thiamine-phosphate synthase">
    <location>
        <begin position="1"/>
        <end position="211"/>
    </location>
</feature>
<feature type="binding site" evidence="1">
    <location>
        <begin position="37"/>
        <end position="41"/>
    </location>
    <ligand>
        <name>4-amino-2-methyl-5-(diphosphooxymethyl)pyrimidine</name>
        <dbReference type="ChEBI" id="CHEBI:57841"/>
    </ligand>
</feature>
<feature type="binding site" evidence="1">
    <location>
        <position position="69"/>
    </location>
    <ligand>
        <name>4-amino-2-methyl-5-(diphosphooxymethyl)pyrimidine</name>
        <dbReference type="ChEBI" id="CHEBI:57841"/>
    </ligand>
</feature>
<feature type="binding site" evidence="1">
    <location>
        <position position="70"/>
    </location>
    <ligand>
        <name>Mg(2+)</name>
        <dbReference type="ChEBI" id="CHEBI:18420"/>
    </ligand>
</feature>
<feature type="binding site" evidence="1">
    <location>
        <position position="89"/>
    </location>
    <ligand>
        <name>Mg(2+)</name>
        <dbReference type="ChEBI" id="CHEBI:18420"/>
    </ligand>
</feature>
<feature type="binding site" evidence="1">
    <location>
        <position position="108"/>
    </location>
    <ligand>
        <name>4-amino-2-methyl-5-(diphosphooxymethyl)pyrimidine</name>
        <dbReference type="ChEBI" id="CHEBI:57841"/>
    </ligand>
</feature>
<feature type="binding site" evidence="1">
    <location>
        <begin position="134"/>
        <end position="136"/>
    </location>
    <ligand>
        <name>2-[(2R,5Z)-2-carboxy-4-methylthiazol-5(2H)-ylidene]ethyl phosphate</name>
        <dbReference type="ChEBI" id="CHEBI:62899"/>
    </ligand>
</feature>
<feature type="binding site" evidence="1">
    <location>
        <position position="137"/>
    </location>
    <ligand>
        <name>4-amino-2-methyl-5-(diphosphooxymethyl)pyrimidine</name>
        <dbReference type="ChEBI" id="CHEBI:57841"/>
    </ligand>
</feature>
<feature type="binding site" evidence="1">
    <location>
        <position position="166"/>
    </location>
    <ligand>
        <name>2-[(2R,5Z)-2-carboxy-4-methylthiazol-5(2H)-ylidene]ethyl phosphate</name>
        <dbReference type="ChEBI" id="CHEBI:62899"/>
    </ligand>
</feature>
<feature type="binding site" evidence="1">
    <location>
        <begin position="186"/>
        <end position="187"/>
    </location>
    <ligand>
        <name>2-[(2R,5Z)-2-carboxy-4-methylthiazol-5(2H)-ylidene]ethyl phosphate</name>
        <dbReference type="ChEBI" id="CHEBI:62899"/>
    </ligand>
</feature>
<organism>
    <name type="scientific">Salmonella paratyphi A (strain ATCC 9150 / SARB42)</name>
    <dbReference type="NCBI Taxonomy" id="295319"/>
    <lineage>
        <taxon>Bacteria</taxon>
        <taxon>Pseudomonadati</taxon>
        <taxon>Pseudomonadota</taxon>
        <taxon>Gammaproteobacteria</taxon>
        <taxon>Enterobacterales</taxon>
        <taxon>Enterobacteriaceae</taxon>
        <taxon>Salmonella</taxon>
    </lineage>
</organism>
<accession>Q5PKA7</accession>
<reference key="1">
    <citation type="journal article" date="2004" name="Nat. Genet.">
        <title>Comparison of genome degradation in Paratyphi A and Typhi, human-restricted serovars of Salmonella enterica that cause typhoid.</title>
        <authorList>
            <person name="McClelland M."/>
            <person name="Sanderson K.E."/>
            <person name="Clifton S.W."/>
            <person name="Latreille P."/>
            <person name="Porwollik S."/>
            <person name="Sabo A."/>
            <person name="Meyer R."/>
            <person name="Bieri T."/>
            <person name="Ozersky P."/>
            <person name="McLellan M."/>
            <person name="Harkins C.R."/>
            <person name="Wang C."/>
            <person name="Nguyen C."/>
            <person name="Berghoff A."/>
            <person name="Elliott G."/>
            <person name="Kohlberg S."/>
            <person name="Strong C."/>
            <person name="Du F."/>
            <person name="Carter J."/>
            <person name="Kremizki C."/>
            <person name="Layman D."/>
            <person name="Leonard S."/>
            <person name="Sun H."/>
            <person name="Fulton L."/>
            <person name="Nash W."/>
            <person name="Miner T."/>
            <person name="Minx P."/>
            <person name="Delehaunty K."/>
            <person name="Fronick C."/>
            <person name="Magrini V."/>
            <person name="Nhan M."/>
            <person name="Warren W."/>
            <person name="Florea L."/>
            <person name="Spieth J."/>
            <person name="Wilson R.K."/>
        </authorList>
    </citation>
    <scope>NUCLEOTIDE SEQUENCE [LARGE SCALE GENOMIC DNA]</scope>
    <source>
        <strain>ATCC 9150 / SARB42</strain>
    </source>
</reference>
<proteinExistence type="inferred from homology"/>
<keyword id="KW-0460">Magnesium</keyword>
<keyword id="KW-0479">Metal-binding</keyword>
<keyword id="KW-0784">Thiamine biosynthesis</keyword>
<keyword id="KW-0808">Transferase</keyword>
<evidence type="ECO:0000255" key="1">
    <source>
        <dbReference type="HAMAP-Rule" id="MF_00097"/>
    </source>
</evidence>
<sequence>MYQPDFPTVPFRLGLYPVVDSVEWIERLLEAGVRTIQLRIKDKRDEEVEADVIAAIALGRRYDARLFINDYWRLAMKHNAYGVHLGQEDLETTDLKAIQAAGLRLGVSTHDDMEIDIALAAKPSYIALGHVFPTQTKQMPSAPQGLAQLVRHIERLADYPTVAIGGISLEHAPAVLATGVGSIAVVSAITQAADWRDATAQLLAIAGVGDE</sequence>
<comment type="function">
    <text evidence="1">Condenses 4-methyl-5-(beta-hydroxyethyl)thiazole monophosphate (THZ-P) and 2-methyl-4-amino-5-hydroxymethyl pyrimidine pyrophosphate (HMP-PP) to form thiamine monophosphate (TMP).</text>
</comment>
<comment type="catalytic activity">
    <reaction evidence="1">
        <text>2-[(2R,5Z)-2-carboxy-4-methylthiazol-5(2H)-ylidene]ethyl phosphate + 4-amino-2-methyl-5-(diphosphooxymethyl)pyrimidine + 2 H(+) = thiamine phosphate + CO2 + diphosphate</text>
        <dbReference type="Rhea" id="RHEA:47844"/>
        <dbReference type="ChEBI" id="CHEBI:15378"/>
        <dbReference type="ChEBI" id="CHEBI:16526"/>
        <dbReference type="ChEBI" id="CHEBI:33019"/>
        <dbReference type="ChEBI" id="CHEBI:37575"/>
        <dbReference type="ChEBI" id="CHEBI:57841"/>
        <dbReference type="ChEBI" id="CHEBI:62899"/>
        <dbReference type="EC" id="2.5.1.3"/>
    </reaction>
</comment>
<comment type="catalytic activity">
    <reaction evidence="1">
        <text>2-(2-carboxy-4-methylthiazol-5-yl)ethyl phosphate + 4-amino-2-methyl-5-(diphosphooxymethyl)pyrimidine + 2 H(+) = thiamine phosphate + CO2 + diphosphate</text>
        <dbReference type="Rhea" id="RHEA:47848"/>
        <dbReference type="ChEBI" id="CHEBI:15378"/>
        <dbReference type="ChEBI" id="CHEBI:16526"/>
        <dbReference type="ChEBI" id="CHEBI:33019"/>
        <dbReference type="ChEBI" id="CHEBI:37575"/>
        <dbReference type="ChEBI" id="CHEBI:57841"/>
        <dbReference type="ChEBI" id="CHEBI:62890"/>
        <dbReference type="EC" id="2.5.1.3"/>
    </reaction>
</comment>
<comment type="catalytic activity">
    <reaction evidence="1">
        <text>4-methyl-5-(2-phosphooxyethyl)-thiazole + 4-amino-2-methyl-5-(diphosphooxymethyl)pyrimidine + H(+) = thiamine phosphate + diphosphate</text>
        <dbReference type="Rhea" id="RHEA:22328"/>
        <dbReference type="ChEBI" id="CHEBI:15378"/>
        <dbReference type="ChEBI" id="CHEBI:33019"/>
        <dbReference type="ChEBI" id="CHEBI:37575"/>
        <dbReference type="ChEBI" id="CHEBI:57841"/>
        <dbReference type="ChEBI" id="CHEBI:58296"/>
        <dbReference type="EC" id="2.5.1.3"/>
    </reaction>
</comment>
<comment type="cofactor">
    <cofactor evidence="1">
        <name>Mg(2+)</name>
        <dbReference type="ChEBI" id="CHEBI:18420"/>
    </cofactor>
    <text evidence="1">Binds 1 Mg(2+) ion per subunit.</text>
</comment>
<comment type="pathway">
    <text evidence="1">Cofactor biosynthesis; thiamine diphosphate biosynthesis; thiamine phosphate from 4-amino-2-methyl-5-diphosphomethylpyrimidine and 4-methyl-5-(2-phosphoethyl)-thiazole: step 1/1.</text>
</comment>
<comment type="similarity">
    <text evidence="1">Belongs to the thiamine-phosphate synthase family.</text>
</comment>
<name>THIE_SALPA</name>
<dbReference type="EC" id="2.5.1.3" evidence="1"/>
<dbReference type="EMBL" id="CP000026">
    <property type="protein sequence ID" value="AAV79752.1"/>
    <property type="molecule type" value="Genomic_DNA"/>
</dbReference>
<dbReference type="RefSeq" id="WP_000284646.1">
    <property type="nucleotide sequence ID" value="NC_006511.1"/>
</dbReference>
<dbReference type="SMR" id="Q5PKA7"/>
<dbReference type="KEGG" id="spt:SPA4000"/>
<dbReference type="HOGENOM" id="CLU_018272_3_3_6"/>
<dbReference type="UniPathway" id="UPA00060">
    <property type="reaction ID" value="UER00141"/>
</dbReference>
<dbReference type="Proteomes" id="UP000008185">
    <property type="component" value="Chromosome"/>
</dbReference>
<dbReference type="GO" id="GO:0005737">
    <property type="term" value="C:cytoplasm"/>
    <property type="evidence" value="ECO:0007669"/>
    <property type="project" value="TreeGrafter"/>
</dbReference>
<dbReference type="GO" id="GO:0000287">
    <property type="term" value="F:magnesium ion binding"/>
    <property type="evidence" value="ECO:0007669"/>
    <property type="project" value="UniProtKB-UniRule"/>
</dbReference>
<dbReference type="GO" id="GO:0004789">
    <property type="term" value="F:thiamine-phosphate diphosphorylase activity"/>
    <property type="evidence" value="ECO:0007669"/>
    <property type="project" value="UniProtKB-UniRule"/>
</dbReference>
<dbReference type="GO" id="GO:0009228">
    <property type="term" value="P:thiamine biosynthetic process"/>
    <property type="evidence" value="ECO:0007669"/>
    <property type="project" value="UniProtKB-KW"/>
</dbReference>
<dbReference type="GO" id="GO:0009229">
    <property type="term" value="P:thiamine diphosphate biosynthetic process"/>
    <property type="evidence" value="ECO:0007669"/>
    <property type="project" value="UniProtKB-UniRule"/>
</dbReference>
<dbReference type="CDD" id="cd00564">
    <property type="entry name" value="TMP_TenI"/>
    <property type="match status" value="1"/>
</dbReference>
<dbReference type="FunFam" id="3.20.20.70:FF:000064">
    <property type="entry name" value="Thiamine-phosphate synthase"/>
    <property type="match status" value="1"/>
</dbReference>
<dbReference type="Gene3D" id="3.20.20.70">
    <property type="entry name" value="Aldolase class I"/>
    <property type="match status" value="1"/>
</dbReference>
<dbReference type="HAMAP" id="MF_00097">
    <property type="entry name" value="TMP_synthase"/>
    <property type="match status" value="1"/>
</dbReference>
<dbReference type="InterPro" id="IPR013785">
    <property type="entry name" value="Aldolase_TIM"/>
</dbReference>
<dbReference type="InterPro" id="IPR036206">
    <property type="entry name" value="ThiamineP_synth_sf"/>
</dbReference>
<dbReference type="InterPro" id="IPR022998">
    <property type="entry name" value="ThiamineP_synth_TenI"/>
</dbReference>
<dbReference type="InterPro" id="IPR034291">
    <property type="entry name" value="TMP_synthase"/>
</dbReference>
<dbReference type="NCBIfam" id="NF002904">
    <property type="entry name" value="PRK03512.1"/>
    <property type="match status" value="1"/>
</dbReference>
<dbReference type="NCBIfam" id="TIGR00693">
    <property type="entry name" value="thiE"/>
    <property type="match status" value="1"/>
</dbReference>
<dbReference type="PANTHER" id="PTHR20857">
    <property type="entry name" value="THIAMINE-PHOSPHATE PYROPHOSPHORYLASE"/>
    <property type="match status" value="1"/>
</dbReference>
<dbReference type="PANTHER" id="PTHR20857:SF15">
    <property type="entry name" value="THIAMINE-PHOSPHATE SYNTHASE"/>
    <property type="match status" value="1"/>
</dbReference>
<dbReference type="Pfam" id="PF02581">
    <property type="entry name" value="TMP-TENI"/>
    <property type="match status" value="1"/>
</dbReference>
<dbReference type="SUPFAM" id="SSF51391">
    <property type="entry name" value="Thiamin phosphate synthase"/>
    <property type="match status" value="1"/>
</dbReference>
<protein>
    <recommendedName>
        <fullName evidence="1">Thiamine-phosphate synthase</fullName>
        <shortName evidence="1">TP synthase</shortName>
        <shortName evidence="1">TPS</shortName>
        <ecNumber evidence="1">2.5.1.3</ecNumber>
    </recommendedName>
    <alternativeName>
        <fullName evidence="1">Thiamine-phosphate pyrophosphorylase</fullName>
        <shortName evidence="1">TMP pyrophosphorylase</shortName>
        <shortName evidence="1">TMP-PPase</shortName>
    </alternativeName>
</protein>
<gene>
    <name evidence="1" type="primary">thiE</name>
    <name type="ordered locus">SPA4000</name>
</gene>